<keyword id="KW-0002">3D-structure</keyword>
<keyword id="KW-0007">Acetylation</keyword>
<keyword id="KW-0963">Cytoplasm</keyword>
<keyword id="KW-0396">Initiation factor</keyword>
<keyword id="KW-0597">Phosphoprotein</keyword>
<keyword id="KW-0648">Protein biosynthesis</keyword>
<keyword id="KW-1267">Proteomics identification</keyword>
<keyword id="KW-1185">Reference proteome</keyword>
<evidence type="ECO:0000269" key="1">
    <source>
    </source>
</evidence>
<evidence type="ECO:0000269" key="2">
    <source>
    </source>
</evidence>
<evidence type="ECO:0000269" key="3">
    <source>
    </source>
</evidence>
<evidence type="ECO:0000269" key="4">
    <source>
    </source>
</evidence>
<evidence type="ECO:0000269" key="5">
    <source>
    </source>
</evidence>
<evidence type="ECO:0000269" key="6">
    <source>
    </source>
</evidence>
<evidence type="ECO:0000303" key="7">
    <source>
    </source>
</evidence>
<evidence type="ECO:0000305" key="8"/>
<evidence type="ECO:0000305" key="9">
    <source>
    </source>
</evidence>
<evidence type="ECO:0000312" key="10">
    <source>
        <dbReference type="PDB" id="2IF1"/>
    </source>
</evidence>
<evidence type="ECO:0007744" key="11">
    <source>
    </source>
</evidence>
<evidence type="ECO:0007744" key="12">
    <source>
    </source>
</evidence>
<evidence type="ECO:0007744" key="13">
    <source>
    </source>
</evidence>
<evidence type="ECO:0007744" key="14">
    <source>
    </source>
</evidence>
<evidence type="ECO:0007829" key="15">
    <source>
        <dbReference type="PDB" id="2IF1"/>
    </source>
</evidence>
<evidence type="ECO:0007829" key="16">
    <source>
        <dbReference type="PDB" id="6YBW"/>
    </source>
</evidence>
<evidence type="ECO:0007829" key="17">
    <source>
        <dbReference type="PDB" id="8PPK"/>
    </source>
</evidence>
<comment type="function">
    <text evidence="2 3 4 5 6">Component of the 43S pre-initiation complex (43S PIC), which binds to the mRNA cap-proximal region, scans mRNA 5'-untranslated region, and locates the initiation codon (PubMed:12435632, PubMed:14600024, PubMed:9732867). Together with eIF1A (EIF1AX), EIF1 facilitates scanning and is essential for start codon recognition on the basis of AUG nucleotide context and location relative to the 5'-cap (PubMed:12435632, PubMed:14600024, PubMed:9732867). Participates to initiation codon selection by influencing the conformation of the 40S ribosomal subunit and the positions of bound mRNA and initiator tRNA; this is possible after its binding to the interface surface of the platform of the 40S ribosomal subunit close to the P-site (PubMed:14600024). Together with eIF1A (EIF1AX), also regulates the opening and closing of the mRNA binding channel, which ensures mRNA recruitment, scanning and the fidelity of initiation codon selection (PubMed:9732867). Continuously monitors and protects against premature and partial base-pairing of codons in the 5'-UTR with the anticodon of initiator tRNA (PubMed:12435632, PubMed:9732867). Together with eIF1A (EIF1AX), acts for ribosomal scanning, promotion of the assembly of 48S complex at the initiation codon (43S PIC becomes 48S PIC after the start codon is reached), and dissociation of aberrant complexes (PubMed:9732867). Interacts with EIF4G1, which in a mutual exclusive interaction associates either with EIF1 or with EIF4E on a common binding site (PubMed:29987188). EIF4G1-EIF1 complex promotes ribosome scanning (on both short and long 5'UTR), leaky scanning (on short 5'UTR) which is the bypass of the initial start codon, and discrimination against cap-proximal AUG (PubMed:29987188). Is probably maintained within the 43S PIC in open conformation thanks to eIF1A-EIF5 interaction (PubMed:24319994). Once the correct start codon is reached, EIF1 is physically excluded from the decoding site, shifting the PIC into the closed conformation and arresting it at the start codon (PubMed:22813744).</text>
</comment>
<comment type="subunit">
    <text evidence="1 5">Component of the 43S pre-initiation complex (43S PIC), which is composed of the 40S ribosomal subunit, EIF1, eIF1A (EIF1AX), eIF3 complex, EIF5 and eIF2-GTP-initiator tRNA complex (eIF2 ternary complex). Interacts with EIF4G1; in specific 5'-UTR length and AUG context (PubMed:29987188). Interacts with EIF5; which in a mutual exclusive interaction associates either with EIF1 or with EIF2S2 on a common binding site (PubMed:22813744). Interacts with RENT2 (PubMed:11073994).</text>
</comment>
<comment type="interaction">
    <interactant intactId="EBI-726200">
        <id>P41567</id>
    </interactant>
    <interactant intactId="EBI-366617">
        <id>Q14152</id>
        <label>EIF3A</label>
    </interactant>
    <organismsDiffer>false</organismsDiffer>
    <experiments>2</experiments>
</comment>
<comment type="interaction">
    <interactant intactId="EBI-726200">
        <id>P41567</id>
    </interactant>
    <interactant intactId="EBI-353741">
        <id>Q99613</id>
        <label>EIF3C</label>
    </interactant>
    <organismsDiffer>false</organismsDiffer>
    <experiments>2</experiments>
</comment>
<comment type="subcellular location">
    <subcellularLocation>
        <location evidence="8">Cytoplasm</location>
    </subcellularLocation>
</comment>
<comment type="similarity">
    <text evidence="8">Belongs to the SUI1 family.</text>
</comment>
<reference key="1">
    <citation type="journal article" date="1994" name="Biochem. Biophys. Res. Commun.">
        <title>Expressed sequence tags identify a human isolog of the suil translation initiation factor.</title>
        <authorList>
            <person name="Fields C.A."/>
            <person name="Adams M.D."/>
        </authorList>
    </citation>
    <scope>NUCLEOTIDE SEQUENCE [MRNA]</scope>
</reference>
<reference key="2">
    <citation type="submission" date="1998-08" db="EMBL/GenBank/DDBJ databases">
        <title>Okadaic acid-responsive genes in malignant glioma cells identified by mRNA differential display.</title>
        <authorList>
            <person name="Singh S.K."/>
            <person name="Murray S.F."/>
            <person name="Chin L.S."/>
        </authorList>
    </citation>
    <scope>NUCLEOTIDE SEQUENCE [MRNA]</scope>
    <source>
        <tissue>Brain</tissue>
    </source>
</reference>
<reference key="3">
    <citation type="journal article" date="1999" name="J. Biol. Chem.">
        <title>Cloning and characterization of a human genotoxic and endoplasmic reticulum stress-inducible cDNA that encodes translation initiation factor 1 (eIF1(A121/SUI1)).</title>
        <authorList>
            <person name="Sheikh M.S."/>
            <person name="Fernandez-Salas E."/>
            <person name="Yu M."/>
            <person name="Hussain A."/>
            <person name="Dinman J.D."/>
            <person name="Peltz S.W."/>
            <person name="Huang Y."/>
            <person name="Fornace A.J. Jr."/>
        </authorList>
    </citation>
    <scope>NUCLEOTIDE SEQUENCE [MRNA]</scope>
</reference>
<reference key="4">
    <citation type="journal article" date="2004" name="Genome Res.">
        <title>The status, quality, and expansion of the NIH full-length cDNA project: the Mammalian Gene Collection (MGC).</title>
        <authorList>
            <consortium name="The MGC Project Team"/>
        </authorList>
    </citation>
    <scope>NUCLEOTIDE SEQUENCE [LARGE SCALE MRNA]</scope>
    <source>
        <tissue>Eye</tissue>
        <tissue>Lung</tissue>
    </source>
</reference>
<reference key="5">
    <citation type="journal article" date="1998" name="Nature">
        <title>Eukaryotic ribosomes require initiation factors 1 and 1A to locate initiation codons.</title>
        <authorList>
            <person name="Pestova T.V."/>
            <person name="Borukhov S.I."/>
            <person name="Hellen C.U."/>
        </authorList>
    </citation>
    <scope>FUNCTION</scope>
</reference>
<reference key="6">
    <citation type="journal article" date="2000" name="Mol. Cell. Biol.">
        <title>Novel Upf2p orthologues suggest a functional link between translation initiation and nonsense surveillance complexes.</title>
        <authorList>
            <person name="Mendell J.T."/>
            <person name="Medghalchi S.M."/>
            <person name="Lake R.G."/>
            <person name="Noensie E.N."/>
            <person name="Dietz H.C."/>
        </authorList>
    </citation>
    <scope>INTERACTION WITH RENT2</scope>
</reference>
<reference key="7">
    <citation type="journal article" date="2002" name="Genes Dev.">
        <title>The roles of individual eukaryotic translation initiation factors in ribosomal scanning and initiation codon selection.</title>
        <authorList>
            <person name="Pestova T.V."/>
            <person name="Kolupaeva V.G."/>
        </authorList>
    </citation>
    <scope>FUNCTION</scope>
</reference>
<reference key="8">
    <citation type="journal article" date="2003" name="Genes Dev.">
        <title>Position of eukaryotic initiation factor eIF1 on the 40S ribosomal subunit determined by directed hydroxyl radical probing.</title>
        <authorList>
            <person name="Lomakin I.B."/>
            <person name="Kolupaeva V.G."/>
            <person name="Marintchev A."/>
            <person name="Wagner G."/>
            <person name="Pestova T.V."/>
        </authorList>
    </citation>
    <scope>FUNCTION</scope>
</reference>
<reference key="9">
    <citation type="journal article" date="2009" name="Anal. Chem.">
        <title>Lys-N and trypsin cover complementary parts of the phosphoproteome in a refined SCX-based approach.</title>
        <authorList>
            <person name="Gauci S."/>
            <person name="Helbig A.O."/>
            <person name="Slijper M."/>
            <person name="Krijgsveld J."/>
            <person name="Heck A.J."/>
            <person name="Mohammed S."/>
        </authorList>
    </citation>
    <scope>ACETYLATION [LARGE SCALE ANALYSIS] AT SER-2</scope>
    <scope>CLEAVAGE OF INITIATOR METHIONINE [LARGE SCALE ANALYSIS]</scope>
    <scope>IDENTIFICATION BY MASS SPECTROMETRY [LARGE SCALE ANALYSIS]</scope>
</reference>
<reference key="10">
    <citation type="journal article" date="2010" name="Sci. Signal.">
        <title>Quantitative phosphoproteomics reveals widespread full phosphorylation site occupancy during mitosis.</title>
        <authorList>
            <person name="Olsen J.V."/>
            <person name="Vermeulen M."/>
            <person name="Santamaria A."/>
            <person name="Kumar C."/>
            <person name="Miller M.L."/>
            <person name="Jensen L.J."/>
            <person name="Gnad F."/>
            <person name="Cox J."/>
            <person name="Jensen T.S."/>
            <person name="Nigg E.A."/>
            <person name="Brunak S."/>
            <person name="Mann M."/>
        </authorList>
    </citation>
    <scope>ACETYLATION [LARGE SCALE ANALYSIS] AT SER-2</scope>
    <scope>CLEAVAGE OF INITIATOR METHIONINE [LARGE SCALE ANALYSIS]</scope>
    <scope>IDENTIFICATION BY MASS SPECTROMETRY [LARGE SCALE ANALYSIS]</scope>
    <source>
        <tissue>Cervix carcinoma</tissue>
    </source>
</reference>
<reference key="11">
    <citation type="journal article" date="2011" name="Sci. Signal.">
        <title>System-wide temporal characterization of the proteome and phosphoproteome of human embryonic stem cell differentiation.</title>
        <authorList>
            <person name="Rigbolt K.T."/>
            <person name="Prokhorova T.A."/>
            <person name="Akimov V."/>
            <person name="Henningsen J."/>
            <person name="Johansen P.T."/>
            <person name="Kratchmarova I."/>
            <person name="Kassem M."/>
            <person name="Mann M."/>
            <person name="Olsen J.V."/>
            <person name="Blagoev B."/>
        </authorList>
    </citation>
    <scope>ACETYLATION [LARGE SCALE ANALYSIS] AT SER-2</scope>
    <scope>PHOSPHORYLATION [LARGE SCALE ANALYSIS] AT SER-9</scope>
    <scope>CLEAVAGE OF INITIATOR METHIONINE [LARGE SCALE ANALYSIS]</scope>
    <scope>IDENTIFICATION BY MASS SPECTROMETRY [LARGE SCALE ANALYSIS]</scope>
</reference>
<reference key="12">
    <citation type="journal article" date="2012" name="Cell Rep.">
        <title>The C-terminal domain of eukaryotic initiation factor 5 promotes start codon recognition by its dynamic interplay with eIF1 and eIF2beta.</title>
        <authorList>
            <person name="Luna R.E."/>
            <person name="Arthanari H."/>
            <person name="Hiraishi H."/>
            <person name="Nanda J."/>
            <person name="Martin-Marcos P."/>
            <person name="Markus M.A."/>
            <person name="Akabayov B."/>
            <person name="Milbradt A.G."/>
            <person name="Luna L.E."/>
            <person name="Seo H.C."/>
            <person name="Hyberts S.G."/>
            <person name="Fahmy A."/>
            <person name="Reibarkh M."/>
            <person name="Miles D."/>
            <person name="Hagner P.R."/>
            <person name="O'Day E.M."/>
            <person name="Yi T."/>
            <person name="Marintchev A."/>
            <person name="Hinnebusch A.G."/>
            <person name="Lorsch J.R."/>
            <person name="Asano K."/>
            <person name="Wagner G."/>
        </authorList>
    </citation>
    <scope>FUNCTION</scope>
    <scope>SUBUNIT</scope>
    <scope>INTERACTION WITH EIF5</scope>
</reference>
<reference key="13">
    <citation type="journal article" date="2013" name="Biochemistry">
        <title>The interaction between eukaryotic initiation factor 1A and eIF5 retains eIF1 within scanning preinitiation complexes.</title>
        <authorList>
            <person name="Luna R.E."/>
            <person name="Arthanari H."/>
            <person name="Hiraishi H."/>
            <person name="Akabayov B."/>
            <person name="Tang L."/>
            <person name="Cox C."/>
            <person name="Markus M.A."/>
            <person name="Luna L.E."/>
            <person name="Ikeda Y."/>
            <person name="Watanabe R."/>
            <person name="Bedoya E."/>
            <person name="Yu C."/>
            <person name="Alikhan S."/>
            <person name="Wagner G."/>
            <person name="Asano K."/>
        </authorList>
    </citation>
    <scope>FUNCTION</scope>
</reference>
<reference key="14">
    <citation type="journal article" date="2013" name="J. Proteome Res.">
        <title>Toward a comprehensive characterization of a human cancer cell phosphoproteome.</title>
        <authorList>
            <person name="Zhou H."/>
            <person name="Di Palma S."/>
            <person name="Preisinger C."/>
            <person name="Peng M."/>
            <person name="Polat A.N."/>
            <person name="Heck A.J."/>
            <person name="Mohammed S."/>
        </authorList>
    </citation>
    <scope>PHOSPHORYLATION [LARGE SCALE ANALYSIS] AT SER-2 AND SER-9</scope>
    <scope>IDENTIFICATION BY MASS SPECTROMETRY [LARGE SCALE ANALYSIS]</scope>
    <source>
        <tissue>Erythroleukemia</tissue>
    </source>
</reference>
<reference key="15">
    <citation type="journal article" date="2018" name="Mol. Cell. Biol.">
        <title>Dynamic interaction of eukaryotic initiation factor 4G1 (eIF4G1) with eIF4E and eIF1 underlies scanning-dependent and -independent translation.</title>
        <authorList>
            <person name="Haimov O."/>
            <person name="Sehrawat U."/>
            <person name="Tamarkin-Ben Harush A."/>
            <person name="Bahat A."/>
            <person name="Uzonyi A."/>
            <person name="Will A."/>
            <person name="Hiraishi H."/>
            <person name="Asano K."/>
            <person name="Dikstein R."/>
        </authorList>
    </citation>
    <scope>FUNCTION</scope>
    <scope>INTERACTION WITH EIF4G1</scope>
    <scope>MUTAGENESIS OF 57-LYS-LYS-58 AND 109-LYS--HIS-111</scope>
</reference>
<reference evidence="10" key="16">
    <citation type="journal article" date="1999" name="EMBO J.">
        <title>Structure and interactions of the translation initiation factor eIF1.</title>
        <authorList>
            <person name="Fletcher C.M."/>
            <person name="Pestova T.V."/>
            <person name="Hellen C.U."/>
            <person name="Wagner G."/>
        </authorList>
    </citation>
    <scope>STRUCTURE BY NMR</scope>
</reference>
<name>EIF1_HUMAN</name>
<organism>
    <name type="scientific">Homo sapiens</name>
    <name type="common">Human</name>
    <dbReference type="NCBI Taxonomy" id="9606"/>
    <lineage>
        <taxon>Eukaryota</taxon>
        <taxon>Metazoa</taxon>
        <taxon>Chordata</taxon>
        <taxon>Craniata</taxon>
        <taxon>Vertebrata</taxon>
        <taxon>Euteleostomi</taxon>
        <taxon>Mammalia</taxon>
        <taxon>Eutheria</taxon>
        <taxon>Euarchontoglires</taxon>
        <taxon>Primates</taxon>
        <taxon>Haplorrhini</taxon>
        <taxon>Catarrhini</taxon>
        <taxon>Hominidae</taxon>
        <taxon>Homo</taxon>
    </lineage>
</organism>
<proteinExistence type="evidence at protein level"/>
<protein>
    <recommendedName>
        <fullName evidence="7">Eukaryotic translation initiation factor 1</fullName>
        <shortName evidence="7">eIF1</shortName>
    </recommendedName>
    <alternativeName>
        <fullName>A121</fullName>
    </alternativeName>
    <alternativeName>
        <fullName>Protein translation factor SUI1 homolog</fullName>
    </alternativeName>
    <alternativeName>
        <fullName>Sui1iso1</fullName>
    </alternativeName>
</protein>
<feature type="initiator methionine" description="Removed" evidence="11 12 13">
    <location>
        <position position="1"/>
    </location>
</feature>
<feature type="chain" id="PRO_0000130554" description="Eukaryotic translation initiation factor 1">
    <location>
        <begin position="2"/>
        <end position="113"/>
    </location>
</feature>
<feature type="site" description="Binds 40S ribosomal subunit" evidence="9">
    <location>
        <position position="41"/>
    </location>
</feature>
<feature type="site" description="Binds 40S ribosomal subunit" evidence="9">
    <location>
        <position position="65"/>
    </location>
</feature>
<feature type="modified residue" description="N-acetylserine" evidence="11 12 13">
    <location>
        <position position="2"/>
    </location>
</feature>
<feature type="modified residue" description="Phosphoserine" evidence="14">
    <location>
        <position position="2"/>
    </location>
</feature>
<feature type="modified residue" description="Phosphoserine" evidence="13 14">
    <location>
        <position position="9"/>
    </location>
</feature>
<feature type="sequence variant" id="VAR_052505" description="In dbSNP:rs3390.">
    <original>L</original>
    <variation>P</variation>
    <location>
        <position position="59"/>
    </location>
</feature>
<feature type="sequence variant" id="VAR_052506" description="In dbSNP:rs3387.">
    <original>R</original>
    <variation>G</variation>
    <location>
        <position position="90"/>
    </location>
</feature>
<feature type="mutagenesis site" description="Decrease in interaction with EIF4G1." evidence="5">
    <original>KK</original>
    <variation>AA</variation>
    <location>
        <begin position="57"/>
        <end position="58"/>
    </location>
</feature>
<feature type="mutagenesis site" description="Decrease in interaction with EIF4G1." evidence="5">
    <original>KVH</original>
    <variation>AVA</variation>
    <location>
        <begin position="109"/>
        <end position="111"/>
    </location>
</feature>
<feature type="sequence conflict" description="In Ref. 3; AAD19900." evidence="8" ref="3">
    <original>I</original>
    <variation>V</variation>
    <location>
        <position position="31"/>
    </location>
</feature>
<feature type="sequence conflict" description="In Ref. 3; AAD19900." evidence="8" ref="3">
    <original>A</original>
    <variation>P</variation>
    <location>
        <position position="62"/>
    </location>
</feature>
<feature type="strand" evidence="17">
    <location>
        <begin position="31"/>
        <end position="37"/>
    </location>
</feature>
<feature type="strand" evidence="15">
    <location>
        <begin position="38"/>
        <end position="41"/>
    </location>
</feature>
<feature type="strand" evidence="17">
    <location>
        <begin position="43"/>
        <end position="48"/>
    </location>
</feature>
<feature type="strand" evidence="16">
    <location>
        <begin position="52"/>
        <end position="54"/>
    </location>
</feature>
<feature type="helix" evidence="17">
    <location>
        <begin position="56"/>
        <end position="67"/>
    </location>
</feature>
<feature type="strand" evidence="17">
    <location>
        <begin position="71"/>
        <end position="76"/>
    </location>
</feature>
<feature type="turn" evidence="17">
    <location>
        <begin position="77"/>
        <end position="79"/>
    </location>
</feature>
<feature type="strand" evidence="17">
    <location>
        <begin position="80"/>
        <end position="88"/>
    </location>
</feature>
<feature type="helix" evidence="17">
    <location>
        <begin position="90"/>
        <end position="100"/>
    </location>
</feature>
<feature type="turn" evidence="17">
    <location>
        <begin position="105"/>
        <end position="107"/>
    </location>
</feature>
<feature type="strand" evidence="17">
    <location>
        <begin position="108"/>
        <end position="110"/>
    </location>
</feature>
<gene>
    <name type="primary">EIF1</name>
    <name type="synonym">SUI1</name>
</gene>
<dbReference type="EMBL" id="L26247">
    <property type="protein sequence ID" value="AAA60602.1"/>
    <property type="molecule type" value="mRNA"/>
</dbReference>
<dbReference type="EMBL" id="AF083441">
    <property type="protein sequence ID" value="AAD52028.1"/>
    <property type="molecule type" value="mRNA"/>
</dbReference>
<dbReference type="EMBL" id="AF100737">
    <property type="protein sequence ID" value="AAD19900.1"/>
    <property type="molecule type" value="mRNA"/>
</dbReference>
<dbReference type="EMBL" id="BC005118">
    <property type="protein sequence ID" value="AAH05118.1"/>
    <property type="molecule type" value="mRNA"/>
</dbReference>
<dbReference type="EMBL" id="BC008710">
    <property type="protein sequence ID" value="AAH08710.1"/>
    <property type="molecule type" value="mRNA"/>
</dbReference>
<dbReference type="CCDS" id="CCDS11403.1"/>
<dbReference type="PIR" id="JC2042">
    <property type="entry name" value="JC2042"/>
</dbReference>
<dbReference type="RefSeq" id="NP_005792.1">
    <property type="nucleotide sequence ID" value="NM_005801.4"/>
</dbReference>
<dbReference type="PDB" id="2IF1">
    <property type="method" value="NMR"/>
    <property type="chains" value="A=1-113"/>
</dbReference>
<dbReference type="PDB" id="4KZX">
    <property type="method" value="X-ray"/>
    <property type="resolution" value="7.81 A"/>
    <property type="chains" value="l=1-113"/>
</dbReference>
<dbReference type="PDB" id="4KZY">
    <property type="method" value="X-ray"/>
    <property type="resolution" value="7.01 A"/>
    <property type="chains" value="l=1-113"/>
</dbReference>
<dbReference type="PDB" id="6YBW">
    <property type="method" value="EM"/>
    <property type="resolution" value="3.10 A"/>
    <property type="chains" value="p=1-113"/>
</dbReference>
<dbReference type="PDB" id="6ZMW">
    <property type="method" value="EM"/>
    <property type="resolution" value="3.70 A"/>
    <property type="chains" value="p=1-113"/>
</dbReference>
<dbReference type="PDB" id="6ZP4">
    <property type="method" value="EM"/>
    <property type="resolution" value="2.90 A"/>
    <property type="chains" value="Z=1-113"/>
</dbReference>
<dbReference type="PDB" id="6ZVJ">
    <property type="method" value="EM"/>
    <property type="resolution" value="3.80 A"/>
    <property type="chains" value="N=23-113"/>
</dbReference>
<dbReference type="PDB" id="7A09">
    <property type="method" value="EM"/>
    <property type="resolution" value="3.50 A"/>
    <property type="chains" value="Z=1-113"/>
</dbReference>
<dbReference type="PDB" id="7QP6">
    <property type="method" value="EM"/>
    <property type="resolution" value="4.70 A"/>
    <property type="chains" value="p=1-113"/>
</dbReference>
<dbReference type="PDB" id="8PJ1">
    <property type="method" value="EM"/>
    <property type="resolution" value="3.40 A"/>
    <property type="chains" value="p=1-113"/>
</dbReference>
<dbReference type="PDB" id="8PPK">
    <property type="method" value="EM"/>
    <property type="resolution" value="2.98 A"/>
    <property type="chains" value="p=1-113"/>
</dbReference>
<dbReference type="PDB" id="8PPL">
    <property type="method" value="EM"/>
    <property type="resolution" value="2.65 A"/>
    <property type="chains" value="Ip=1-113"/>
</dbReference>
<dbReference type="PDB" id="8XXN">
    <property type="method" value="EM"/>
    <property type="resolution" value="3.60 A"/>
    <property type="chains" value="C1=1-113"/>
</dbReference>
<dbReference type="PDB" id="9BLN">
    <property type="method" value="EM"/>
    <property type="resolution" value="3.90 A"/>
    <property type="chains" value="W=1-113"/>
</dbReference>
<dbReference type="PDBsum" id="2IF1"/>
<dbReference type="PDBsum" id="4KZX"/>
<dbReference type="PDBsum" id="4KZY"/>
<dbReference type="PDBsum" id="6YBW"/>
<dbReference type="PDBsum" id="6ZMW"/>
<dbReference type="PDBsum" id="6ZP4"/>
<dbReference type="PDBsum" id="6ZVJ"/>
<dbReference type="PDBsum" id="7A09"/>
<dbReference type="PDBsum" id="7QP6"/>
<dbReference type="PDBsum" id="8PJ1"/>
<dbReference type="PDBsum" id="8PPK"/>
<dbReference type="PDBsum" id="8PPL"/>
<dbReference type="PDBsum" id="8XXN"/>
<dbReference type="PDBsum" id="9BLN"/>
<dbReference type="BMRB" id="P41567"/>
<dbReference type="EMDB" id="EMD-10775"/>
<dbReference type="EMDB" id="EMD-11302"/>
<dbReference type="EMDB" id="EMD-11335"/>
<dbReference type="EMDB" id="EMD-11458"/>
<dbReference type="EMDB" id="EMD-14113"/>
<dbReference type="EMDB" id="EMD-17696"/>
<dbReference type="EMDB" id="EMD-17804"/>
<dbReference type="EMDB" id="EMD-17805"/>
<dbReference type="EMDB" id="EMD-38754"/>
<dbReference type="EMDB" id="EMD-44671"/>
<dbReference type="SMR" id="P41567"/>
<dbReference type="BioGRID" id="115504">
    <property type="interactions" value="41"/>
</dbReference>
<dbReference type="DIP" id="DIP-50783N"/>
<dbReference type="FunCoup" id="P41567">
    <property type="interactions" value="1968"/>
</dbReference>
<dbReference type="IntAct" id="P41567">
    <property type="interactions" value="17"/>
</dbReference>
<dbReference type="MINT" id="P41567"/>
<dbReference type="STRING" id="9606.ENSP00000419449"/>
<dbReference type="GlyGen" id="P41567">
    <property type="glycosylation" value="2 sites, 1 N-linked glycan (1 site), 1 O-linked glycan (1 site)"/>
</dbReference>
<dbReference type="iPTMnet" id="P41567"/>
<dbReference type="PhosphoSitePlus" id="P41567"/>
<dbReference type="BioMuta" id="EIF1"/>
<dbReference type="jPOST" id="P41567"/>
<dbReference type="MassIVE" id="P41567"/>
<dbReference type="PaxDb" id="9606-ENSP00000419449"/>
<dbReference type="PeptideAtlas" id="P41567"/>
<dbReference type="ProteomicsDB" id="55464"/>
<dbReference type="Pumba" id="P41567"/>
<dbReference type="TopDownProteomics" id="P41567"/>
<dbReference type="Antibodypedia" id="28894">
    <property type="antibodies" value="209 antibodies from 30 providers"/>
</dbReference>
<dbReference type="DNASU" id="10209"/>
<dbReference type="Ensembl" id="ENST00000469257.2">
    <property type="protein sequence ID" value="ENSP00000419449.1"/>
    <property type="gene ID" value="ENSG00000173812.11"/>
</dbReference>
<dbReference type="GeneID" id="10209"/>
<dbReference type="KEGG" id="hsa:10209"/>
<dbReference type="MANE-Select" id="ENST00000469257.2">
    <property type="protein sequence ID" value="ENSP00000419449.1"/>
    <property type="RefSeq nucleotide sequence ID" value="NM_005801.4"/>
    <property type="RefSeq protein sequence ID" value="NP_005792.1"/>
</dbReference>
<dbReference type="AGR" id="HGNC:3249"/>
<dbReference type="CTD" id="10209"/>
<dbReference type="DisGeNET" id="10209"/>
<dbReference type="GeneCards" id="EIF1"/>
<dbReference type="HGNC" id="HGNC:3249">
    <property type="gene designation" value="EIF1"/>
</dbReference>
<dbReference type="HPA" id="ENSG00000173812">
    <property type="expression patterns" value="Low tissue specificity"/>
</dbReference>
<dbReference type="MIM" id="619901">
    <property type="type" value="gene"/>
</dbReference>
<dbReference type="neXtProt" id="NX_P41567"/>
<dbReference type="OpenTargets" id="ENSG00000173812"/>
<dbReference type="PharmGKB" id="PA27683"/>
<dbReference type="VEuPathDB" id="HostDB:ENSG00000173812"/>
<dbReference type="eggNOG" id="KOG1770">
    <property type="taxonomic scope" value="Eukaryota"/>
</dbReference>
<dbReference type="GeneTree" id="ENSGT00390000015789"/>
<dbReference type="HOGENOM" id="CLU_082805_3_0_1"/>
<dbReference type="InParanoid" id="P41567"/>
<dbReference type="OMA" id="VENHIHI"/>
<dbReference type="OrthoDB" id="10248435at2759"/>
<dbReference type="PAN-GO" id="P41567">
    <property type="GO annotations" value="4 GO annotations based on evolutionary models"/>
</dbReference>
<dbReference type="PhylomeDB" id="P41567"/>
<dbReference type="TreeFam" id="TF314417"/>
<dbReference type="PathwayCommons" id="P41567"/>
<dbReference type="SignaLink" id="P41567"/>
<dbReference type="SIGNOR" id="P41567"/>
<dbReference type="BioGRID-ORCS" id="10209">
    <property type="hits" value="723 hits in 1162 CRISPR screens"/>
</dbReference>
<dbReference type="CD-CODE" id="DEE660B4">
    <property type="entry name" value="Stress granule"/>
</dbReference>
<dbReference type="ChiTaRS" id="EIF1">
    <property type="organism name" value="human"/>
</dbReference>
<dbReference type="EvolutionaryTrace" id="P41567"/>
<dbReference type="GeneWiki" id="EIF1"/>
<dbReference type="GenomeRNAi" id="10209"/>
<dbReference type="Pharos" id="P41567">
    <property type="development level" value="Tbio"/>
</dbReference>
<dbReference type="PRO" id="PR:P41567"/>
<dbReference type="Proteomes" id="UP000005640">
    <property type="component" value="Chromosome 17"/>
</dbReference>
<dbReference type="RNAct" id="P41567">
    <property type="molecule type" value="protein"/>
</dbReference>
<dbReference type="Bgee" id="ENSG00000173812">
    <property type="expression patterns" value="Expressed in sperm and 207 other cell types or tissues"/>
</dbReference>
<dbReference type="ExpressionAtlas" id="P41567">
    <property type="expression patterns" value="baseline and differential"/>
</dbReference>
<dbReference type="GO" id="GO:0005737">
    <property type="term" value="C:cytoplasm"/>
    <property type="evidence" value="ECO:0000314"/>
    <property type="project" value="UniProtKB"/>
</dbReference>
<dbReference type="GO" id="GO:0016282">
    <property type="term" value="C:eukaryotic 43S preinitiation complex"/>
    <property type="evidence" value="ECO:0000314"/>
    <property type="project" value="UniProtKB"/>
</dbReference>
<dbReference type="GO" id="GO:0033290">
    <property type="term" value="C:eukaryotic 48S preinitiation complex"/>
    <property type="evidence" value="ECO:0000314"/>
    <property type="project" value="UniProtKB"/>
</dbReference>
<dbReference type="GO" id="GO:0043614">
    <property type="term" value="C:multi-eIF complex"/>
    <property type="evidence" value="ECO:0000314"/>
    <property type="project" value="UniProtKB"/>
</dbReference>
<dbReference type="GO" id="GO:0005634">
    <property type="term" value="C:nucleus"/>
    <property type="evidence" value="ECO:0000314"/>
    <property type="project" value="UniProtKB"/>
</dbReference>
<dbReference type="GO" id="GO:0043024">
    <property type="term" value="F:ribosomal small subunit binding"/>
    <property type="evidence" value="ECO:0000314"/>
    <property type="project" value="UniProtKB"/>
</dbReference>
<dbReference type="GO" id="GO:0003723">
    <property type="term" value="F:RNA binding"/>
    <property type="evidence" value="ECO:0007005"/>
    <property type="project" value="UniProtKB"/>
</dbReference>
<dbReference type="GO" id="GO:0008135">
    <property type="term" value="F:translation factor activity, RNA binding"/>
    <property type="evidence" value="ECO:0000304"/>
    <property type="project" value="ProtInc"/>
</dbReference>
<dbReference type="GO" id="GO:0003743">
    <property type="term" value="F:translation initiation factor activity"/>
    <property type="evidence" value="ECO:0000314"/>
    <property type="project" value="UniProtKB"/>
</dbReference>
<dbReference type="GO" id="GO:0006446">
    <property type="term" value="P:regulation of translational initiation"/>
    <property type="evidence" value="ECO:0000314"/>
    <property type="project" value="CACAO"/>
</dbReference>
<dbReference type="GO" id="GO:0006413">
    <property type="term" value="P:translational initiation"/>
    <property type="evidence" value="ECO:0000314"/>
    <property type="project" value="UniProtKB"/>
</dbReference>
<dbReference type="CDD" id="cd11566">
    <property type="entry name" value="eIF1_SUI1"/>
    <property type="match status" value="1"/>
</dbReference>
<dbReference type="DisProt" id="DP00910"/>
<dbReference type="FunFam" id="3.30.780.10:FF:000003">
    <property type="entry name" value="Eukaryotic translation initiation factor 1b"/>
    <property type="match status" value="1"/>
</dbReference>
<dbReference type="Gene3D" id="3.30.780.10">
    <property type="entry name" value="SUI1-like domain"/>
    <property type="match status" value="1"/>
</dbReference>
<dbReference type="InterPro" id="IPR001950">
    <property type="entry name" value="SUI1"/>
</dbReference>
<dbReference type="InterPro" id="IPR036877">
    <property type="entry name" value="SUI1_dom_sf"/>
</dbReference>
<dbReference type="InterPro" id="IPR005874">
    <property type="entry name" value="SUI1_euk"/>
</dbReference>
<dbReference type="NCBIfam" id="TIGR01160">
    <property type="entry name" value="SUI1_MOF2"/>
    <property type="match status" value="1"/>
</dbReference>
<dbReference type="PANTHER" id="PTHR10388">
    <property type="entry name" value="EUKARYOTIC TRANSLATION INITIATION FACTOR SUI1"/>
    <property type="match status" value="1"/>
</dbReference>
<dbReference type="Pfam" id="PF01253">
    <property type="entry name" value="SUI1"/>
    <property type="match status" value="1"/>
</dbReference>
<dbReference type="PIRSF" id="PIRSF004499">
    <property type="entry name" value="SUI1_euk"/>
    <property type="match status" value="1"/>
</dbReference>
<dbReference type="SUPFAM" id="SSF55159">
    <property type="entry name" value="eIF1-like"/>
    <property type="match status" value="1"/>
</dbReference>
<dbReference type="PROSITE" id="PS50296">
    <property type="entry name" value="SUI1"/>
    <property type="match status" value="1"/>
</dbReference>
<accession>P41567</accession>
<accession>Q9UNQ9</accession>
<sequence>MSAIQNLHSFDPFADASKGDDLLPAGTEDYIHIRIQQRNGRKTLTTVQGIADDYDKKKLVKAFKKKFACNGTVIEHPEYGEVIQLQGDQRKNICQFLVEIGLAKDDQLKVHGF</sequence>